<sequence length="311" mass="33213">MPKQHLVIATRQSALALWQAEHVKQRLEALHPGLTVELLGLTTKGDIILDTPLAKVGGKGLFVKELETAMLEGRADIAVHSMKDVPMEFPPGLGLGAILERETPMDAFVSNQYASLDELPEGAVVGTSSLRRQCQLSERRPDLKILSLRGNVNTRLAKLDAGDFDAIILAASGLKRLGFSGRIREELTPEVSLPAVGQGALGIECRLDDPEAMALIAQLQDAETTARVSAERAMNHRLQGGCQVPIAGYAEITGDQMRLRGLVGSPDGAQVLRDEVEGPVAAAEALGTELAERLLQQGAGKILEAVYGNHS</sequence>
<organism>
    <name type="scientific">Hahella chejuensis (strain KCTC 2396)</name>
    <dbReference type="NCBI Taxonomy" id="349521"/>
    <lineage>
        <taxon>Bacteria</taxon>
        <taxon>Pseudomonadati</taxon>
        <taxon>Pseudomonadota</taxon>
        <taxon>Gammaproteobacteria</taxon>
        <taxon>Oceanospirillales</taxon>
        <taxon>Hahellaceae</taxon>
        <taxon>Hahella</taxon>
    </lineage>
</organism>
<gene>
    <name evidence="1" type="primary">hemC</name>
    <name type="ordered locus">HCH_00291</name>
</gene>
<dbReference type="EC" id="2.5.1.61" evidence="1"/>
<dbReference type="EMBL" id="CP000155">
    <property type="protein sequence ID" value="ABC27204.1"/>
    <property type="molecule type" value="Genomic_DNA"/>
</dbReference>
<dbReference type="RefSeq" id="WP_011394281.1">
    <property type="nucleotide sequence ID" value="NC_007645.1"/>
</dbReference>
<dbReference type="SMR" id="Q2SQ70"/>
<dbReference type="STRING" id="349521.HCH_00291"/>
<dbReference type="KEGG" id="hch:HCH_00291"/>
<dbReference type="eggNOG" id="COG0181">
    <property type="taxonomic scope" value="Bacteria"/>
</dbReference>
<dbReference type="HOGENOM" id="CLU_019704_0_2_6"/>
<dbReference type="OrthoDB" id="9810298at2"/>
<dbReference type="UniPathway" id="UPA00251">
    <property type="reaction ID" value="UER00319"/>
</dbReference>
<dbReference type="Proteomes" id="UP000000238">
    <property type="component" value="Chromosome"/>
</dbReference>
<dbReference type="GO" id="GO:0005737">
    <property type="term" value="C:cytoplasm"/>
    <property type="evidence" value="ECO:0007669"/>
    <property type="project" value="TreeGrafter"/>
</dbReference>
<dbReference type="GO" id="GO:0004418">
    <property type="term" value="F:hydroxymethylbilane synthase activity"/>
    <property type="evidence" value="ECO:0007669"/>
    <property type="project" value="UniProtKB-UniRule"/>
</dbReference>
<dbReference type="GO" id="GO:0006782">
    <property type="term" value="P:protoporphyrinogen IX biosynthetic process"/>
    <property type="evidence" value="ECO:0007669"/>
    <property type="project" value="UniProtKB-UniRule"/>
</dbReference>
<dbReference type="CDD" id="cd13646">
    <property type="entry name" value="PBP2_EcHMBS_like"/>
    <property type="match status" value="1"/>
</dbReference>
<dbReference type="FunFam" id="3.30.160.40:FF:000002">
    <property type="entry name" value="Porphobilinogen deaminase"/>
    <property type="match status" value="1"/>
</dbReference>
<dbReference type="FunFam" id="3.40.190.10:FF:000004">
    <property type="entry name" value="Porphobilinogen deaminase"/>
    <property type="match status" value="1"/>
</dbReference>
<dbReference type="FunFam" id="3.40.190.10:FF:000005">
    <property type="entry name" value="Porphobilinogen deaminase"/>
    <property type="match status" value="1"/>
</dbReference>
<dbReference type="Gene3D" id="3.40.190.10">
    <property type="entry name" value="Periplasmic binding protein-like II"/>
    <property type="match status" value="2"/>
</dbReference>
<dbReference type="Gene3D" id="3.30.160.40">
    <property type="entry name" value="Porphobilinogen deaminase, C-terminal domain"/>
    <property type="match status" value="1"/>
</dbReference>
<dbReference type="HAMAP" id="MF_00260">
    <property type="entry name" value="Porphobil_deam"/>
    <property type="match status" value="1"/>
</dbReference>
<dbReference type="InterPro" id="IPR000860">
    <property type="entry name" value="HemC"/>
</dbReference>
<dbReference type="InterPro" id="IPR022419">
    <property type="entry name" value="Porphobilin_deaminase_cofac_BS"/>
</dbReference>
<dbReference type="InterPro" id="IPR022417">
    <property type="entry name" value="Porphobilin_deaminase_N"/>
</dbReference>
<dbReference type="InterPro" id="IPR022418">
    <property type="entry name" value="Porphobilinogen_deaminase_C"/>
</dbReference>
<dbReference type="InterPro" id="IPR036803">
    <property type="entry name" value="Porphobilinogen_deaminase_C_sf"/>
</dbReference>
<dbReference type="NCBIfam" id="TIGR00212">
    <property type="entry name" value="hemC"/>
    <property type="match status" value="1"/>
</dbReference>
<dbReference type="PANTHER" id="PTHR11557">
    <property type="entry name" value="PORPHOBILINOGEN DEAMINASE"/>
    <property type="match status" value="1"/>
</dbReference>
<dbReference type="PANTHER" id="PTHR11557:SF0">
    <property type="entry name" value="PORPHOBILINOGEN DEAMINASE"/>
    <property type="match status" value="1"/>
</dbReference>
<dbReference type="Pfam" id="PF01379">
    <property type="entry name" value="Porphobil_deam"/>
    <property type="match status" value="1"/>
</dbReference>
<dbReference type="Pfam" id="PF03900">
    <property type="entry name" value="Porphobil_deamC"/>
    <property type="match status" value="1"/>
</dbReference>
<dbReference type="PIRSF" id="PIRSF001438">
    <property type="entry name" value="4pyrrol_synth_OHMeBilane_synth"/>
    <property type="match status" value="1"/>
</dbReference>
<dbReference type="PRINTS" id="PR00151">
    <property type="entry name" value="PORPHBDMNASE"/>
</dbReference>
<dbReference type="SUPFAM" id="SSF53850">
    <property type="entry name" value="Periplasmic binding protein-like II"/>
    <property type="match status" value="1"/>
</dbReference>
<dbReference type="SUPFAM" id="SSF54782">
    <property type="entry name" value="Porphobilinogen deaminase (hydroxymethylbilane synthase), C-terminal domain"/>
    <property type="match status" value="1"/>
</dbReference>
<dbReference type="PROSITE" id="PS00533">
    <property type="entry name" value="PORPHOBILINOGEN_DEAM"/>
    <property type="match status" value="1"/>
</dbReference>
<comment type="function">
    <text evidence="1">Tetrapolymerization of the monopyrrole PBG into the hydroxymethylbilane pre-uroporphyrinogen in several discrete steps.</text>
</comment>
<comment type="catalytic activity">
    <reaction evidence="1">
        <text>4 porphobilinogen + H2O = hydroxymethylbilane + 4 NH4(+)</text>
        <dbReference type="Rhea" id="RHEA:13185"/>
        <dbReference type="ChEBI" id="CHEBI:15377"/>
        <dbReference type="ChEBI" id="CHEBI:28938"/>
        <dbReference type="ChEBI" id="CHEBI:57845"/>
        <dbReference type="ChEBI" id="CHEBI:58126"/>
        <dbReference type="EC" id="2.5.1.61"/>
    </reaction>
</comment>
<comment type="cofactor">
    <cofactor evidence="1">
        <name>dipyrromethane</name>
        <dbReference type="ChEBI" id="CHEBI:60342"/>
    </cofactor>
    <text evidence="1">Binds 1 dipyrromethane group covalently.</text>
</comment>
<comment type="pathway">
    <text evidence="1">Porphyrin-containing compound metabolism; protoporphyrin-IX biosynthesis; coproporphyrinogen-III from 5-aminolevulinate: step 2/4.</text>
</comment>
<comment type="subunit">
    <text evidence="1">Monomer.</text>
</comment>
<comment type="miscellaneous">
    <text evidence="1">The porphobilinogen subunits are added to the dipyrromethane group.</text>
</comment>
<comment type="similarity">
    <text evidence="1">Belongs to the HMBS family.</text>
</comment>
<evidence type="ECO:0000255" key="1">
    <source>
        <dbReference type="HAMAP-Rule" id="MF_00260"/>
    </source>
</evidence>
<keyword id="KW-0627">Porphyrin biosynthesis</keyword>
<keyword id="KW-1185">Reference proteome</keyword>
<keyword id="KW-0808">Transferase</keyword>
<name>HEM3_HAHCH</name>
<feature type="chain" id="PRO_1000059099" description="Porphobilinogen deaminase">
    <location>
        <begin position="1"/>
        <end position="311"/>
    </location>
</feature>
<feature type="modified residue" description="S-(dipyrrolylmethanemethyl)cysteine" evidence="1">
    <location>
        <position position="242"/>
    </location>
</feature>
<reference key="1">
    <citation type="journal article" date="2005" name="Nucleic Acids Res.">
        <title>Genomic blueprint of Hahella chejuensis, a marine microbe producing an algicidal agent.</title>
        <authorList>
            <person name="Jeong H."/>
            <person name="Yim J.H."/>
            <person name="Lee C."/>
            <person name="Choi S.-H."/>
            <person name="Park Y.K."/>
            <person name="Yoon S.H."/>
            <person name="Hur C.-G."/>
            <person name="Kang H.-Y."/>
            <person name="Kim D."/>
            <person name="Lee H.H."/>
            <person name="Park K.H."/>
            <person name="Park S.-H."/>
            <person name="Park H.-S."/>
            <person name="Lee H.K."/>
            <person name="Oh T.K."/>
            <person name="Kim J.F."/>
        </authorList>
    </citation>
    <scope>NUCLEOTIDE SEQUENCE [LARGE SCALE GENOMIC DNA]</scope>
    <source>
        <strain>KCTC 2396</strain>
    </source>
</reference>
<proteinExistence type="inferred from homology"/>
<protein>
    <recommendedName>
        <fullName evidence="1">Porphobilinogen deaminase</fullName>
        <shortName evidence="1">PBG</shortName>
        <ecNumber evidence="1">2.5.1.61</ecNumber>
    </recommendedName>
    <alternativeName>
        <fullName evidence="1">Hydroxymethylbilane synthase</fullName>
        <shortName evidence="1">HMBS</shortName>
    </alternativeName>
    <alternativeName>
        <fullName evidence="1">Pre-uroporphyrinogen synthase</fullName>
    </alternativeName>
</protein>
<accession>Q2SQ70</accession>